<name>RHAD_SALPA</name>
<comment type="function">
    <text evidence="1">Catalyzes the reversible cleavage of L-rhamnulose-1-phosphate to dihydroxyacetone phosphate (DHAP) and L-lactaldehyde.</text>
</comment>
<comment type="catalytic activity">
    <reaction evidence="1">
        <text>L-rhamnulose 1-phosphate = (S)-lactaldehyde + dihydroxyacetone phosphate</text>
        <dbReference type="Rhea" id="RHEA:19689"/>
        <dbReference type="ChEBI" id="CHEBI:18041"/>
        <dbReference type="ChEBI" id="CHEBI:57642"/>
        <dbReference type="ChEBI" id="CHEBI:58313"/>
        <dbReference type="EC" id="4.1.2.19"/>
    </reaction>
</comment>
<comment type="cofactor">
    <cofactor evidence="1">
        <name>Zn(2+)</name>
        <dbReference type="ChEBI" id="CHEBI:29105"/>
    </cofactor>
    <text evidence="1">Binds 1 zinc ion per subunit.</text>
</comment>
<comment type="pathway">
    <text evidence="1">Carbohydrate degradation; L-rhamnose degradation; glycerone phosphate from L-rhamnose: step 3/3.</text>
</comment>
<comment type="subunit">
    <text evidence="1">Homotetramer.</text>
</comment>
<comment type="subcellular location">
    <subcellularLocation>
        <location evidence="1">Cytoplasm</location>
    </subcellularLocation>
</comment>
<comment type="similarity">
    <text evidence="1">Belongs to the aldolase class II family. RhaD subfamily.</text>
</comment>
<feature type="chain" id="PRO_0000209668" description="Rhamnulose-1-phosphate aldolase">
    <location>
        <begin position="1"/>
        <end position="275"/>
    </location>
</feature>
<feature type="active site" evidence="1">
    <location>
        <position position="117"/>
    </location>
</feature>
<feature type="binding site" evidence="1">
    <location>
        <position position="141"/>
    </location>
    <ligand>
        <name>Zn(2+)</name>
        <dbReference type="ChEBI" id="CHEBI:29105"/>
    </ligand>
</feature>
<feature type="binding site" evidence="1">
    <location>
        <position position="143"/>
    </location>
    <ligand>
        <name>Zn(2+)</name>
        <dbReference type="ChEBI" id="CHEBI:29105"/>
    </ligand>
</feature>
<feature type="binding site" evidence="1">
    <location>
        <position position="212"/>
    </location>
    <ligand>
        <name>Zn(2+)</name>
        <dbReference type="ChEBI" id="CHEBI:29105"/>
    </ligand>
</feature>
<sequence length="275" mass="30157">MQNITDSWFVQGMIKATSDAWLKGWDERNGGNLTLRLDEADIAPFAANFHEKPRYIALSQPMPLLANTPFIVTGSGKFFRNVQLDPAANLGVVKIDSDGAGYHILWGLTHDAVPTSELPAHFLSHCERIKATHGKDRVIMHCHATNLIALTYVLENNTALITRKLWEGSTECLVVFPDGVGILPWMVPGTDEIGQATAQEMQKHSLVLWPFHGVFGSGPTLDETFGLIDTAEKSAEVLVKIYSMGGMKQTITREELVALGKRFGVTPLASAVALY</sequence>
<keyword id="KW-0963">Cytoplasm</keyword>
<keyword id="KW-0456">Lyase</keyword>
<keyword id="KW-0479">Metal-binding</keyword>
<keyword id="KW-0684">Rhamnose metabolism</keyword>
<keyword id="KW-0862">Zinc</keyword>
<evidence type="ECO:0000255" key="1">
    <source>
        <dbReference type="HAMAP-Rule" id="MF_00770"/>
    </source>
</evidence>
<protein>
    <recommendedName>
        <fullName evidence="1">Rhamnulose-1-phosphate aldolase</fullName>
        <ecNumber evidence="1">4.1.2.19</ecNumber>
    </recommendedName>
</protein>
<gene>
    <name evidence="1" type="primary">rhaD</name>
    <name type="ordered locus">SPA3888</name>
</gene>
<proteinExistence type="inferred from homology"/>
<reference key="1">
    <citation type="journal article" date="2004" name="Nat. Genet.">
        <title>Comparison of genome degradation in Paratyphi A and Typhi, human-restricted serovars of Salmonella enterica that cause typhoid.</title>
        <authorList>
            <person name="McClelland M."/>
            <person name="Sanderson K.E."/>
            <person name="Clifton S.W."/>
            <person name="Latreille P."/>
            <person name="Porwollik S."/>
            <person name="Sabo A."/>
            <person name="Meyer R."/>
            <person name="Bieri T."/>
            <person name="Ozersky P."/>
            <person name="McLellan M."/>
            <person name="Harkins C.R."/>
            <person name="Wang C."/>
            <person name="Nguyen C."/>
            <person name="Berghoff A."/>
            <person name="Elliott G."/>
            <person name="Kohlberg S."/>
            <person name="Strong C."/>
            <person name="Du F."/>
            <person name="Carter J."/>
            <person name="Kremizki C."/>
            <person name="Layman D."/>
            <person name="Leonard S."/>
            <person name="Sun H."/>
            <person name="Fulton L."/>
            <person name="Nash W."/>
            <person name="Miner T."/>
            <person name="Minx P."/>
            <person name="Delehaunty K."/>
            <person name="Fronick C."/>
            <person name="Magrini V."/>
            <person name="Nhan M."/>
            <person name="Warren W."/>
            <person name="Florea L."/>
            <person name="Spieth J."/>
            <person name="Wilson R.K."/>
        </authorList>
    </citation>
    <scope>NUCLEOTIDE SEQUENCE [LARGE SCALE GENOMIC DNA]</scope>
    <source>
        <strain>ATCC 9150 / SARB42</strain>
    </source>
</reference>
<organism>
    <name type="scientific">Salmonella paratyphi A (strain ATCC 9150 / SARB42)</name>
    <dbReference type="NCBI Taxonomy" id="295319"/>
    <lineage>
        <taxon>Bacteria</taxon>
        <taxon>Pseudomonadati</taxon>
        <taxon>Pseudomonadota</taxon>
        <taxon>Gammaproteobacteria</taxon>
        <taxon>Enterobacterales</taxon>
        <taxon>Enterobacteriaceae</taxon>
        <taxon>Salmonella</taxon>
    </lineage>
</organism>
<accession>Q5PKG5</accession>
<dbReference type="EC" id="4.1.2.19" evidence="1"/>
<dbReference type="EMBL" id="CP000026">
    <property type="protein sequence ID" value="AAV79654.1"/>
    <property type="molecule type" value="Genomic_DNA"/>
</dbReference>
<dbReference type="RefSeq" id="WP_001179685.1">
    <property type="nucleotide sequence ID" value="NC_006511.1"/>
</dbReference>
<dbReference type="SMR" id="Q5PKG5"/>
<dbReference type="KEGG" id="spt:SPA3888"/>
<dbReference type="HOGENOM" id="CLU_076831_0_0_6"/>
<dbReference type="UniPathway" id="UPA00541">
    <property type="reaction ID" value="UER00603"/>
</dbReference>
<dbReference type="Proteomes" id="UP000008185">
    <property type="component" value="Chromosome"/>
</dbReference>
<dbReference type="GO" id="GO:0005829">
    <property type="term" value="C:cytosol"/>
    <property type="evidence" value="ECO:0007669"/>
    <property type="project" value="TreeGrafter"/>
</dbReference>
<dbReference type="GO" id="GO:0046872">
    <property type="term" value="F:metal ion binding"/>
    <property type="evidence" value="ECO:0007669"/>
    <property type="project" value="UniProtKB-KW"/>
</dbReference>
<dbReference type="GO" id="GO:0008994">
    <property type="term" value="F:rhamnulose-1-phosphate aldolase activity"/>
    <property type="evidence" value="ECO:0007669"/>
    <property type="project" value="UniProtKB-UniRule"/>
</dbReference>
<dbReference type="GO" id="GO:0019323">
    <property type="term" value="P:pentose catabolic process"/>
    <property type="evidence" value="ECO:0007669"/>
    <property type="project" value="TreeGrafter"/>
</dbReference>
<dbReference type="GO" id="GO:0019301">
    <property type="term" value="P:rhamnose catabolic process"/>
    <property type="evidence" value="ECO:0007669"/>
    <property type="project" value="UniProtKB-UniRule"/>
</dbReference>
<dbReference type="CDD" id="cd00398">
    <property type="entry name" value="Aldolase_II"/>
    <property type="match status" value="1"/>
</dbReference>
<dbReference type="FunFam" id="3.40.225.10:FF:000006">
    <property type="entry name" value="Rhamnulose-1-phosphate aldolase"/>
    <property type="match status" value="1"/>
</dbReference>
<dbReference type="Gene3D" id="3.40.225.10">
    <property type="entry name" value="Class II aldolase/adducin N-terminal domain"/>
    <property type="match status" value="1"/>
</dbReference>
<dbReference type="HAMAP" id="MF_00770">
    <property type="entry name" value="RhaD"/>
    <property type="match status" value="1"/>
</dbReference>
<dbReference type="InterPro" id="IPR050197">
    <property type="entry name" value="Aldolase_class_II_sugar_metab"/>
</dbReference>
<dbReference type="InterPro" id="IPR001303">
    <property type="entry name" value="Aldolase_II/adducin_N"/>
</dbReference>
<dbReference type="InterPro" id="IPR036409">
    <property type="entry name" value="Aldolase_II/adducin_N_sf"/>
</dbReference>
<dbReference type="InterPro" id="IPR013447">
    <property type="entry name" value="Rhamnulose-1-P_Aldolase"/>
</dbReference>
<dbReference type="NCBIfam" id="NF002963">
    <property type="entry name" value="PRK03634.1"/>
    <property type="match status" value="1"/>
</dbReference>
<dbReference type="NCBIfam" id="TIGR02624">
    <property type="entry name" value="rhamnu_1P_ald"/>
    <property type="match status" value="1"/>
</dbReference>
<dbReference type="PANTHER" id="PTHR22789">
    <property type="entry name" value="FUCULOSE PHOSPHATE ALDOLASE"/>
    <property type="match status" value="1"/>
</dbReference>
<dbReference type="PANTHER" id="PTHR22789:SF16">
    <property type="entry name" value="RHAMNULOSE-1-PHOSPHATE ALDOLASE"/>
    <property type="match status" value="1"/>
</dbReference>
<dbReference type="Pfam" id="PF00596">
    <property type="entry name" value="Aldolase_II"/>
    <property type="match status" value="1"/>
</dbReference>
<dbReference type="SMART" id="SM01007">
    <property type="entry name" value="Aldolase_II"/>
    <property type="match status" value="1"/>
</dbReference>
<dbReference type="SUPFAM" id="SSF53639">
    <property type="entry name" value="AraD/HMP-PK domain-like"/>
    <property type="match status" value="1"/>
</dbReference>